<dbReference type="EC" id="7.1.1.2"/>
<dbReference type="PaxDb" id="4113-PGSC0003DMT400067766"/>
<dbReference type="InParanoid" id="P80730"/>
<dbReference type="Proteomes" id="UP000011115">
    <property type="component" value="Unassembled WGS sequence"/>
</dbReference>
<dbReference type="GO" id="GO:0005743">
    <property type="term" value="C:mitochondrial inner membrane"/>
    <property type="evidence" value="ECO:0007669"/>
    <property type="project" value="UniProtKB-SubCell"/>
</dbReference>
<dbReference type="GO" id="GO:0008137">
    <property type="term" value="F:NADH dehydrogenase (ubiquinone) activity"/>
    <property type="evidence" value="ECO:0007669"/>
    <property type="project" value="UniProtKB-EC"/>
</dbReference>
<organism>
    <name type="scientific">Solanum tuberosum</name>
    <name type="common">Potato</name>
    <dbReference type="NCBI Taxonomy" id="4113"/>
    <lineage>
        <taxon>Eukaryota</taxon>
        <taxon>Viridiplantae</taxon>
        <taxon>Streptophyta</taxon>
        <taxon>Embryophyta</taxon>
        <taxon>Tracheophyta</taxon>
        <taxon>Spermatophyta</taxon>
        <taxon>Magnoliopsida</taxon>
        <taxon>eudicotyledons</taxon>
        <taxon>Gunneridae</taxon>
        <taxon>Pentapetalae</taxon>
        <taxon>asterids</taxon>
        <taxon>lamiids</taxon>
        <taxon>Solanales</taxon>
        <taxon>Solanaceae</taxon>
        <taxon>Solanoideae</taxon>
        <taxon>Solaneae</taxon>
        <taxon>Solanum</taxon>
    </lineage>
</organism>
<reference key="1">
    <citation type="submission" date="1996-12" db="UniProtKB">
        <authorList>
            <person name="Herz U."/>
            <person name="Grohmann L."/>
        </authorList>
    </citation>
    <scope>PROTEIN SEQUENCE</scope>
    <source>
        <strain>cv. Bintje</strain>
        <tissue>Tuber</tissue>
    </source>
</reference>
<accession>P80730</accession>
<proteinExistence type="evidence at protein level"/>
<name>NUO7_SOLTU</name>
<evidence type="ECO:0000250" key="1"/>
<protein>
    <recommendedName>
        <fullName>NADH-ubiquinone oxidoreductase 16 kDa subunit</fullName>
        <ecNumber>7.1.1.2</ecNumber>
    </recommendedName>
    <alternativeName>
        <fullName>Complex I-16kD</fullName>
        <shortName>CI-16kD</shortName>
    </alternativeName>
</protein>
<feature type="chain" id="PRO_0000118854" description="NADH-ubiquinone oxidoreductase 16 kDa subunit">
    <location>
        <begin position="1"/>
        <end position="22" status="greater than"/>
    </location>
</feature>
<feature type="non-terminal residue">
    <location>
        <position position="22"/>
    </location>
</feature>
<keyword id="KW-0903">Direct protein sequencing</keyword>
<keyword id="KW-0472">Membrane</keyword>
<keyword id="KW-0496">Mitochondrion</keyword>
<keyword id="KW-0999">Mitochondrion inner membrane</keyword>
<keyword id="KW-0520">NAD</keyword>
<keyword id="KW-0560">Oxidoreductase</keyword>
<keyword id="KW-1185">Reference proteome</keyword>
<keyword id="KW-1278">Translocase</keyword>
<keyword id="KW-0830">Ubiquinone</keyword>
<comment type="function">
    <text>Transfer of electrons from NADH to the respiratory chain. The immediate electron acceptor for the enzyme is believed to be ubiquinone.</text>
</comment>
<comment type="catalytic activity">
    <reaction>
        <text>a ubiquinone + NADH + 5 H(+)(in) = a ubiquinol + NAD(+) + 4 H(+)(out)</text>
        <dbReference type="Rhea" id="RHEA:29091"/>
        <dbReference type="Rhea" id="RHEA-COMP:9565"/>
        <dbReference type="Rhea" id="RHEA-COMP:9566"/>
        <dbReference type="ChEBI" id="CHEBI:15378"/>
        <dbReference type="ChEBI" id="CHEBI:16389"/>
        <dbReference type="ChEBI" id="CHEBI:17976"/>
        <dbReference type="ChEBI" id="CHEBI:57540"/>
        <dbReference type="ChEBI" id="CHEBI:57945"/>
        <dbReference type="EC" id="7.1.1.2"/>
    </reaction>
</comment>
<comment type="subunit">
    <text evidence="1">Complex I is composed of about 45 different subunits.</text>
</comment>
<comment type="subcellular location">
    <subcellularLocation>
        <location>Mitochondrion inner membrane</location>
        <topology>Peripheral membrane protein</topology>
        <orientation>Matrix side</orientation>
    </subcellularLocation>
</comment>
<sequence length="22" mass="2436">XSGKVLSEEEKAAANVYIKKME</sequence>